<keyword id="KW-0413">Isomerase</keyword>
<keyword id="KW-0663">Pyridoxal phosphate</keyword>
<accession>A1TIS2</accession>
<evidence type="ECO:0000255" key="1">
    <source>
        <dbReference type="HAMAP-Rule" id="MF_01201"/>
    </source>
</evidence>
<reference key="1">
    <citation type="submission" date="2006-12" db="EMBL/GenBank/DDBJ databases">
        <title>Complete sequence of Acidovorax avenae subsp. citrulli AAC00-1.</title>
        <authorList>
            <person name="Copeland A."/>
            <person name="Lucas S."/>
            <person name="Lapidus A."/>
            <person name="Barry K."/>
            <person name="Detter J.C."/>
            <person name="Glavina del Rio T."/>
            <person name="Dalin E."/>
            <person name="Tice H."/>
            <person name="Pitluck S."/>
            <person name="Kiss H."/>
            <person name="Brettin T."/>
            <person name="Bruce D."/>
            <person name="Han C."/>
            <person name="Tapia R."/>
            <person name="Gilna P."/>
            <person name="Schmutz J."/>
            <person name="Larimer F."/>
            <person name="Land M."/>
            <person name="Hauser L."/>
            <person name="Kyrpides N."/>
            <person name="Kim E."/>
            <person name="Stahl D."/>
            <person name="Richardson P."/>
        </authorList>
    </citation>
    <scope>NUCLEOTIDE SEQUENCE [LARGE SCALE GENOMIC DNA]</scope>
    <source>
        <strain>AAC00-1</strain>
    </source>
</reference>
<organism>
    <name type="scientific">Paracidovorax citrulli (strain AAC00-1)</name>
    <name type="common">Acidovorax citrulli</name>
    <dbReference type="NCBI Taxonomy" id="397945"/>
    <lineage>
        <taxon>Bacteria</taxon>
        <taxon>Pseudomonadati</taxon>
        <taxon>Pseudomonadota</taxon>
        <taxon>Betaproteobacteria</taxon>
        <taxon>Burkholderiales</taxon>
        <taxon>Comamonadaceae</taxon>
        <taxon>Paracidovorax</taxon>
    </lineage>
</organism>
<sequence>MPRPIQATIHTAALQQNLARARAAAPDARVWAVVKANAYGHGIERAFEGLRGADGFALLDLGEAERVRQLGWRGPILLLEGVFEPRDLELCSRLSLWHAVHCDEQIDWLSAHKTHAPHRVFLKMNSGMNRLGFPPARYRAAWARLNALPQVDEISFMTHFSDADGPRGIAHQIDAFCTATQDLPGERTVSNSAATLRHAGGDARVRGDWVRAGIVLYGSAADHPEHTAAHWGLAPTMTLSARIIGTQQLQAGDTVGYGSSFTADRPMTIGVVACGYADGYPRHAPTGTPVLVNGVRTRTVGRVSMDMITVDLTPLHEAGVEAGVGSEATLWGRASCGAVLCIDEVAQAAGTVGYELMCALAPRVPVVVD</sequence>
<feature type="chain" id="PRO_1000065965" description="Alanine racemase">
    <location>
        <begin position="1"/>
        <end position="369"/>
    </location>
</feature>
<feature type="active site" description="Proton acceptor; specific for D-alanine" evidence="1">
    <location>
        <position position="35"/>
    </location>
</feature>
<feature type="active site" description="Proton acceptor; specific for L-alanine" evidence="1">
    <location>
        <position position="257"/>
    </location>
</feature>
<feature type="binding site" evidence="1">
    <location>
        <position position="130"/>
    </location>
    <ligand>
        <name>substrate</name>
    </ligand>
</feature>
<feature type="binding site" evidence="1">
    <location>
        <position position="305"/>
    </location>
    <ligand>
        <name>substrate</name>
    </ligand>
</feature>
<feature type="modified residue" description="N6-(pyridoxal phosphate)lysine" evidence="1">
    <location>
        <position position="35"/>
    </location>
</feature>
<protein>
    <recommendedName>
        <fullName evidence="1">Alanine racemase</fullName>
        <ecNumber evidence="1">5.1.1.1</ecNumber>
    </recommendedName>
</protein>
<comment type="function">
    <text evidence="1">Catalyzes the interconversion of L-alanine and D-alanine. May also act on other amino acids.</text>
</comment>
<comment type="catalytic activity">
    <reaction evidence="1">
        <text>L-alanine = D-alanine</text>
        <dbReference type="Rhea" id="RHEA:20249"/>
        <dbReference type="ChEBI" id="CHEBI:57416"/>
        <dbReference type="ChEBI" id="CHEBI:57972"/>
        <dbReference type="EC" id="5.1.1.1"/>
    </reaction>
</comment>
<comment type="cofactor">
    <cofactor evidence="1">
        <name>pyridoxal 5'-phosphate</name>
        <dbReference type="ChEBI" id="CHEBI:597326"/>
    </cofactor>
</comment>
<comment type="pathway">
    <text evidence="1">Amino-acid biosynthesis; D-alanine biosynthesis; D-alanine from L-alanine: step 1/1.</text>
</comment>
<comment type="similarity">
    <text evidence="1">Belongs to the alanine racemase family.</text>
</comment>
<dbReference type="EC" id="5.1.1.1" evidence="1"/>
<dbReference type="EMBL" id="CP000512">
    <property type="protein sequence ID" value="ABM30860.1"/>
    <property type="molecule type" value="Genomic_DNA"/>
</dbReference>
<dbReference type="RefSeq" id="WP_011793438.1">
    <property type="nucleotide sequence ID" value="NC_008752.1"/>
</dbReference>
<dbReference type="SMR" id="A1TIS2"/>
<dbReference type="STRING" id="397945.Aave_0253"/>
<dbReference type="GeneID" id="79790056"/>
<dbReference type="KEGG" id="aav:Aave_0253"/>
<dbReference type="eggNOG" id="COG0787">
    <property type="taxonomic scope" value="Bacteria"/>
</dbReference>
<dbReference type="HOGENOM" id="CLU_028393_1_0_4"/>
<dbReference type="OrthoDB" id="9813814at2"/>
<dbReference type="UniPathway" id="UPA00042">
    <property type="reaction ID" value="UER00497"/>
</dbReference>
<dbReference type="Proteomes" id="UP000002596">
    <property type="component" value="Chromosome"/>
</dbReference>
<dbReference type="GO" id="GO:0005829">
    <property type="term" value="C:cytosol"/>
    <property type="evidence" value="ECO:0007669"/>
    <property type="project" value="TreeGrafter"/>
</dbReference>
<dbReference type="GO" id="GO:0008784">
    <property type="term" value="F:alanine racemase activity"/>
    <property type="evidence" value="ECO:0007669"/>
    <property type="project" value="UniProtKB-UniRule"/>
</dbReference>
<dbReference type="GO" id="GO:0030170">
    <property type="term" value="F:pyridoxal phosphate binding"/>
    <property type="evidence" value="ECO:0007669"/>
    <property type="project" value="UniProtKB-UniRule"/>
</dbReference>
<dbReference type="GO" id="GO:0030632">
    <property type="term" value="P:D-alanine biosynthetic process"/>
    <property type="evidence" value="ECO:0007669"/>
    <property type="project" value="UniProtKB-UniRule"/>
</dbReference>
<dbReference type="CDD" id="cd06827">
    <property type="entry name" value="PLPDE_III_AR_proteobact"/>
    <property type="match status" value="1"/>
</dbReference>
<dbReference type="FunFam" id="3.20.20.10:FF:000002">
    <property type="entry name" value="Alanine racemase"/>
    <property type="match status" value="1"/>
</dbReference>
<dbReference type="Gene3D" id="3.20.20.10">
    <property type="entry name" value="Alanine racemase"/>
    <property type="match status" value="1"/>
</dbReference>
<dbReference type="Gene3D" id="2.40.37.10">
    <property type="entry name" value="Lyase, Ornithine Decarboxylase, Chain A, domain 1"/>
    <property type="match status" value="1"/>
</dbReference>
<dbReference type="HAMAP" id="MF_01201">
    <property type="entry name" value="Ala_racemase"/>
    <property type="match status" value="1"/>
</dbReference>
<dbReference type="InterPro" id="IPR000821">
    <property type="entry name" value="Ala_racemase"/>
</dbReference>
<dbReference type="InterPro" id="IPR009006">
    <property type="entry name" value="Ala_racemase/Decarboxylase_C"/>
</dbReference>
<dbReference type="InterPro" id="IPR011079">
    <property type="entry name" value="Ala_racemase_C"/>
</dbReference>
<dbReference type="InterPro" id="IPR001608">
    <property type="entry name" value="Ala_racemase_N"/>
</dbReference>
<dbReference type="InterPro" id="IPR020622">
    <property type="entry name" value="Ala_racemase_pyridoxalP-BS"/>
</dbReference>
<dbReference type="InterPro" id="IPR029066">
    <property type="entry name" value="PLP-binding_barrel"/>
</dbReference>
<dbReference type="NCBIfam" id="TIGR00492">
    <property type="entry name" value="alr"/>
    <property type="match status" value="1"/>
</dbReference>
<dbReference type="PANTHER" id="PTHR30511">
    <property type="entry name" value="ALANINE RACEMASE"/>
    <property type="match status" value="1"/>
</dbReference>
<dbReference type="PANTHER" id="PTHR30511:SF0">
    <property type="entry name" value="ALANINE RACEMASE, CATABOLIC-RELATED"/>
    <property type="match status" value="1"/>
</dbReference>
<dbReference type="Pfam" id="PF00842">
    <property type="entry name" value="Ala_racemase_C"/>
    <property type="match status" value="1"/>
</dbReference>
<dbReference type="Pfam" id="PF01168">
    <property type="entry name" value="Ala_racemase_N"/>
    <property type="match status" value="1"/>
</dbReference>
<dbReference type="PRINTS" id="PR00992">
    <property type="entry name" value="ALARACEMASE"/>
</dbReference>
<dbReference type="SMART" id="SM01005">
    <property type="entry name" value="Ala_racemase_C"/>
    <property type="match status" value="1"/>
</dbReference>
<dbReference type="SUPFAM" id="SSF50621">
    <property type="entry name" value="Alanine racemase C-terminal domain-like"/>
    <property type="match status" value="1"/>
</dbReference>
<dbReference type="SUPFAM" id="SSF51419">
    <property type="entry name" value="PLP-binding barrel"/>
    <property type="match status" value="1"/>
</dbReference>
<dbReference type="PROSITE" id="PS00395">
    <property type="entry name" value="ALANINE_RACEMASE"/>
    <property type="match status" value="1"/>
</dbReference>
<gene>
    <name type="primary">alr</name>
    <name type="ordered locus">Aave_0253</name>
</gene>
<proteinExistence type="inferred from homology"/>
<name>ALR_PARC0</name>